<evidence type="ECO:0000255" key="1">
    <source>
        <dbReference type="PROSITE-ProRule" id="PRU00042"/>
    </source>
</evidence>
<evidence type="ECO:0000255" key="2">
    <source>
        <dbReference type="PROSITE-ProRule" id="PRU00119"/>
    </source>
</evidence>
<evidence type="ECO:0000256" key="3">
    <source>
        <dbReference type="SAM" id="MobiDB-lite"/>
    </source>
</evidence>
<evidence type="ECO:0000269" key="4">
    <source>
    </source>
</evidence>
<evidence type="ECO:0000269" key="5">
    <source ref="3"/>
</evidence>
<evidence type="ECO:0000305" key="6"/>
<evidence type="ECO:0007744" key="7">
    <source>
    </source>
</evidence>
<accession>Q96C28</accession>
<accession>A8K317</accession>
<accession>B3KNY1</accession>
<accession>D3DWK7</accession>
<proteinExistence type="evidence at protein level"/>
<protein>
    <recommendedName>
        <fullName>Zinc finger protein 707</fullName>
    </recommendedName>
</protein>
<dbReference type="EMBL" id="AK290432">
    <property type="protein sequence ID" value="BAF83121.1"/>
    <property type="status" value="ALT_INIT"/>
    <property type="molecule type" value="mRNA"/>
</dbReference>
<dbReference type="EMBL" id="AK055263">
    <property type="protein sequence ID" value="BAG51493.1"/>
    <property type="molecule type" value="mRNA"/>
</dbReference>
<dbReference type="EMBL" id="AC105219">
    <property type="status" value="NOT_ANNOTATED_CDS"/>
    <property type="molecule type" value="Genomic_DNA"/>
</dbReference>
<dbReference type="EMBL" id="CH471162">
    <property type="protein sequence ID" value="EAW82210.1"/>
    <property type="molecule type" value="Genomic_DNA"/>
</dbReference>
<dbReference type="EMBL" id="CH471162">
    <property type="protein sequence ID" value="EAW82211.1"/>
    <property type="molecule type" value="Genomic_DNA"/>
</dbReference>
<dbReference type="EMBL" id="CH471162">
    <property type="protein sequence ID" value="EAW82214.1"/>
    <property type="molecule type" value="Genomic_DNA"/>
</dbReference>
<dbReference type="EMBL" id="BC014894">
    <property type="protein sequence ID" value="AAH14894.1"/>
    <property type="status" value="ALT_INIT"/>
    <property type="molecule type" value="mRNA"/>
</dbReference>
<dbReference type="CCDS" id="CCDS47932.1"/>
<dbReference type="RefSeq" id="NP_001094068.1">
    <property type="nucleotide sequence ID" value="NM_001100598.2"/>
</dbReference>
<dbReference type="RefSeq" id="NP_001094069.1">
    <property type="nucleotide sequence ID" value="NM_001100599.2"/>
</dbReference>
<dbReference type="RefSeq" id="NP_001275734.1">
    <property type="nucleotide sequence ID" value="NM_001288805.2"/>
</dbReference>
<dbReference type="RefSeq" id="NP_001275735.1">
    <property type="nucleotide sequence ID" value="NM_001288806.2"/>
</dbReference>
<dbReference type="RefSeq" id="NP_001275736.1">
    <property type="nucleotide sequence ID" value="NM_001288807.1"/>
</dbReference>
<dbReference type="RefSeq" id="NP_001275737.1">
    <property type="nucleotide sequence ID" value="NM_001288808.1"/>
</dbReference>
<dbReference type="RefSeq" id="NP_001275738.1">
    <property type="nucleotide sequence ID" value="NM_001288809.1"/>
</dbReference>
<dbReference type="RefSeq" id="NP_776192.2">
    <property type="nucleotide sequence ID" value="NM_173831.4"/>
</dbReference>
<dbReference type="RefSeq" id="XP_011515279.1">
    <property type="nucleotide sequence ID" value="XM_011516977.2"/>
</dbReference>
<dbReference type="SMR" id="Q96C28"/>
<dbReference type="BioGRID" id="130290">
    <property type="interactions" value="80"/>
</dbReference>
<dbReference type="FunCoup" id="Q96C28">
    <property type="interactions" value="167"/>
</dbReference>
<dbReference type="IntAct" id="Q96C28">
    <property type="interactions" value="60"/>
</dbReference>
<dbReference type="STRING" id="9606.ENSP00000436212"/>
<dbReference type="iPTMnet" id="Q96C28"/>
<dbReference type="PhosphoSitePlus" id="Q96C28"/>
<dbReference type="BioMuta" id="ZNF707"/>
<dbReference type="DMDM" id="296453056"/>
<dbReference type="jPOST" id="Q96C28"/>
<dbReference type="MassIVE" id="Q96C28"/>
<dbReference type="PaxDb" id="9606-ENSP00000436212"/>
<dbReference type="PeptideAtlas" id="Q96C28"/>
<dbReference type="Pumba" id="Q96C28"/>
<dbReference type="Antibodypedia" id="7422">
    <property type="antibodies" value="86 antibodies from 21 providers"/>
</dbReference>
<dbReference type="DNASU" id="286075"/>
<dbReference type="Ensembl" id="ENST00000358656.9">
    <property type="protein sequence ID" value="ENSP00000351482.4"/>
    <property type="gene ID" value="ENSG00000181135.16"/>
</dbReference>
<dbReference type="Ensembl" id="ENST00000418203.3">
    <property type="protein sequence ID" value="ENSP00000413215.2"/>
    <property type="gene ID" value="ENSG00000181135.16"/>
</dbReference>
<dbReference type="Ensembl" id="ENST00000532158.5">
    <property type="protein sequence ID" value="ENSP00000436250.1"/>
    <property type="gene ID" value="ENSG00000181135.16"/>
</dbReference>
<dbReference type="Ensembl" id="ENST00000532205.5">
    <property type="protein sequence ID" value="ENSP00000436212.1"/>
    <property type="gene ID" value="ENSG00000181135.16"/>
</dbReference>
<dbReference type="Ensembl" id="ENST00000611146.4">
    <property type="protein sequence ID" value="ENSP00000484032.2"/>
    <property type="gene ID" value="ENSG00000274352.4"/>
</dbReference>
<dbReference type="Ensembl" id="ENST00000611844.4">
    <property type="protein sequence ID" value="ENSP00000481069.1"/>
    <property type="gene ID" value="ENSG00000274352.4"/>
</dbReference>
<dbReference type="Ensembl" id="ENST00000617261.4">
    <property type="protein sequence ID" value="ENSP00000484744.2"/>
    <property type="gene ID" value="ENSG00000274352.4"/>
</dbReference>
<dbReference type="Ensembl" id="ENST00000622212.1">
    <property type="protein sequence ID" value="ENSP00000481033.1"/>
    <property type="gene ID" value="ENSG00000274352.4"/>
</dbReference>
<dbReference type="GeneID" id="286075"/>
<dbReference type="KEGG" id="hsa:286075"/>
<dbReference type="MANE-Select" id="ENST00000358656.9">
    <property type="protein sequence ID" value="ENSP00000351482.4"/>
    <property type="RefSeq nucleotide sequence ID" value="NM_001100598.2"/>
    <property type="RefSeq protein sequence ID" value="NP_001094068.1"/>
</dbReference>
<dbReference type="UCSC" id="uc003yze.5">
    <property type="organism name" value="human"/>
</dbReference>
<dbReference type="AGR" id="HGNC:27815"/>
<dbReference type="CTD" id="286075"/>
<dbReference type="GeneCards" id="ZNF707"/>
<dbReference type="HGNC" id="HGNC:27815">
    <property type="gene designation" value="ZNF707"/>
</dbReference>
<dbReference type="HPA" id="ENSG00000181135">
    <property type="expression patterns" value="Low tissue specificity"/>
</dbReference>
<dbReference type="neXtProt" id="NX_Q96C28"/>
<dbReference type="OpenTargets" id="ENSG00000181135"/>
<dbReference type="PharmGKB" id="PA142670506"/>
<dbReference type="VEuPathDB" id="HostDB:ENSG00000181135"/>
<dbReference type="eggNOG" id="KOG1721">
    <property type="taxonomic scope" value="Eukaryota"/>
</dbReference>
<dbReference type="GeneTree" id="ENSGT00940000164666"/>
<dbReference type="HOGENOM" id="CLU_002678_0_7_1"/>
<dbReference type="InParanoid" id="Q96C28"/>
<dbReference type="OMA" id="EQWDELW"/>
<dbReference type="OrthoDB" id="6077919at2759"/>
<dbReference type="PAN-GO" id="Q96C28">
    <property type="GO annotations" value="3 GO annotations based on evolutionary models"/>
</dbReference>
<dbReference type="PhylomeDB" id="Q96C28"/>
<dbReference type="TreeFam" id="TF337055"/>
<dbReference type="PathwayCommons" id="Q96C28"/>
<dbReference type="Reactome" id="R-HSA-212436">
    <property type="pathway name" value="Generic Transcription Pathway"/>
</dbReference>
<dbReference type="SignaLink" id="Q96C28"/>
<dbReference type="BioGRID-ORCS" id="286075">
    <property type="hits" value="14 hits in 1177 CRISPR screens"/>
</dbReference>
<dbReference type="GenomeRNAi" id="286075"/>
<dbReference type="Pharos" id="Q96C28">
    <property type="development level" value="Tdark"/>
</dbReference>
<dbReference type="PRO" id="PR:Q96C28"/>
<dbReference type="Proteomes" id="UP000005640">
    <property type="component" value="Chromosome 8"/>
</dbReference>
<dbReference type="RNAct" id="Q96C28">
    <property type="molecule type" value="protein"/>
</dbReference>
<dbReference type="Bgee" id="ENSG00000181135">
    <property type="expression patterns" value="Expressed in primordial germ cell in gonad and 99 other cell types or tissues"/>
</dbReference>
<dbReference type="ExpressionAtlas" id="Q96C28">
    <property type="expression patterns" value="baseline and differential"/>
</dbReference>
<dbReference type="GO" id="GO:0005634">
    <property type="term" value="C:nucleus"/>
    <property type="evidence" value="ECO:0007669"/>
    <property type="project" value="UniProtKB-SubCell"/>
</dbReference>
<dbReference type="GO" id="GO:0003700">
    <property type="term" value="F:DNA-binding transcription factor activity"/>
    <property type="evidence" value="ECO:0000318"/>
    <property type="project" value="GO_Central"/>
</dbReference>
<dbReference type="GO" id="GO:0000978">
    <property type="term" value="F:RNA polymerase II cis-regulatory region sequence-specific DNA binding"/>
    <property type="evidence" value="ECO:0000318"/>
    <property type="project" value="GO_Central"/>
</dbReference>
<dbReference type="GO" id="GO:0008270">
    <property type="term" value="F:zinc ion binding"/>
    <property type="evidence" value="ECO:0007669"/>
    <property type="project" value="UniProtKB-KW"/>
</dbReference>
<dbReference type="GO" id="GO:0006357">
    <property type="term" value="P:regulation of transcription by RNA polymerase II"/>
    <property type="evidence" value="ECO:0000318"/>
    <property type="project" value="GO_Central"/>
</dbReference>
<dbReference type="CDD" id="cd07765">
    <property type="entry name" value="KRAB_A-box"/>
    <property type="match status" value="1"/>
</dbReference>
<dbReference type="FunFam" id="3.30.160.60:FF:002716">
    <property type="entry name" value="Zinc finger protein 212"/>
    <property type="match status" value="1"/>
</dbReference>
<dbReference type="FunFam" id="3.30.160.60:FF:002853">
    <property type="entry name" value="zinc finger protein 707 isoform X1"/>
    <property type="match status" value="1"/>
</dbReference>
<dbReference type="FunFam" id="3.30.160.60:FF:000710">
    <property type="entry name" value="Zinc finger protein 768"/>
    <property type="match status" value="1"/>
</dbReference>
<dbReference type="FunFam" id="3.30.160.60:FF:000617">
    <property type="entry name" value="Zinc finger protein 777"/>
    <property type="match status" value="1"/>
</dbReference>
<dbReference type="FunFam" id="3.30.160.60:FF:001011">
    <property type="entry name" value="Zinc finger protein 793"/>
    <property type="match status" value="1"/>
</dbReference>
<dbReference type="Gene3D" id="6.10.140.140">
    <property type="match status" value="1"/>
</dbReference>
<dbReference type="Gene3D" id="3.30.160.60">
    <property type="entry name" value="Classic Zinc Finger"/>
    <property type="match status" value="7"/>
</dbReference>
<dbReference type="InterPro" id="IPR001909">
    <property type="entry name" value="KRAB"/>
</dbReference>
<dbReference type="InterPro" id="IPR036051">
    <property type="entry name" value="KRAB_dom_sf"/>
</dbReference>
<dbReference type="InterPro" id="IPR036236">
    <property type="entry name" value="Znf_C2H2_sf"/>
</dbReference>
<dbReference type="InterPro" id="IPR013087">
    <property type="entry name" value="Znf_C2H2_type"/>
</dbReference>
<dbReference type="PANTHER" id="PTHR24390">
    <property type="entry name" value="ZINC FINGER PROTEIN"/>
    <property type="match status" value="1"/>
</dbReference>
<dbReference type="PANTHER" id="PTHR24390:SF129">
    <property type="entry name" value="ZINC FINGER PROTEIN 707"/>
    <property type="match status" value="1"/>
</dbReference>
<dbReference type="Pfam" id="PF01352">
    <property type="entry name" value="KRAB"/>
    <property type="match status" value="1"/>
</dbReference>
<dbReference type="Pfam" id="PF00096">
    <property type="entry name" value="zf-C2H2"/>
    <property type="match status" value="5"/>
</dbReference>
<dbReference type="SMART" id="SM00349">
    <property type="entry name" value="KRAB"/>
    <property type="match status" value="1"/>
</dbReference>
<dbReference type="SMART" id="SM00355">
    <property type="entry name" value="ZnF_C2H2"/>
    <property type="match status" value="7"/>
</dbReference>
<dbReference type="SUPFAM" id="SSF57667">
    <property type="entry name" value="beta-beta-alpha zinc fingers"/>
    <property type="match status" value="4"/>
</dbReference>
<dbReference type="SUPFAM" id="SSF109640">
    <property type="entry name" value="KRAB domain (Kruppel-associated box)"/>
    <property type="match status" value="1"/>
</dbReference>
<dbReference type="PROSITE" id="PS50805">
    <property type="entry name" value="KRAB"/>
    <property type="match status" value="1"/>
</dbReference>
<dbReference type="PROSITE" id="PS00028">
    <property type="entry name" value="ZINC_FINGER_C2H2_1"/>
    <property type="match status" value="7"/>
</dbReference>
<dbReference type="PROSITE" id="PS50157">
    <property type="entry name" value="ZINC_FINGER_C2H2_2"/>
    <property type="match status" value="7"/>
</dbReference>
<organism>
    <name type="scientific">Homo sapiens</name>
    <name type="common">Human</name>
    <dbReference type="NCBI Taxonomy" id="9606"/>
    <lineage>
        <taxon>Eukaryota</taxon>
        <taxon>Metazoa</taxon>
        <taxon>Chordata</taxon>
        <taxon>Craniata</taxon>
        <taxon>Vertebrata</taxon>
        <taxon>Euteleostomi</taxon>
        <taxon>Mammalia</taxon>
        <taxon>Eutheria</taxon>
        <taxon>Euarchontoglires</taxon>
        <taxon>Primates</taxon>
        <taxon>Haplorrhini</taxon>
        <taxon>Catarrhini</taxon>
        <taxon>Hominidae</taxon>
        <taxon>Homo</taxon>
    </lineage>
</organism>
<gene>
    <name type="primary">ZNF707</name>
</gene>
<sequence>MDMAQEPVTFRDVAIYFSREEWACLEPSQRALYRDVMLDNFSSVAALGFCSPRPDLVSRLEQWEEPWVEDRERPEFQAVQRGPRPGARKSADPKRPCDHPAWAHKKTHVRRERAREGSSFRKGFRLDTDDGQLPRAAPERTDAKPTAFPCQVLTQRCGRRPGRRERRKQRAVELSFICGTCGKALSCHSRLLAHQTVHTGTKAFECPECGQTFRWASNLQRHQKNHTREKPFCCEACGQAFSLKDRLAQHRKVHTEHRPYSCGDCGKAFKQKSNLLRHQLVHTGERPFYCADCGKAFRTKENLSHHQRVHSGEKPYTCAECGKSFRWPKGFSIHRRLHLTKRFYECGHCGKGFRHLGFFTRHQRTHRHGEV</sequence>
<comment type="function">
    <text>May be involved in transcriptional regulation.</text>
</comment>
<comment type="interaction">
    <interactant intactId="EBI-748111">
        <id>Q96C28</id>
    </interactant>
    <interactant intactId="EBI-12861768">
        <id>Q6NVI2</id>
        <label>CASP8</label>
    </interactant>
    <organismsDiffer>false</organismsDiffer>
    <experiments>3</experiments>
</comment>
<comment type="interaction">
    <interactant intactId="EBI-748111">
        <id>Q96C28</id>
    </interactant>
    <interactant intactId="EBI-748961">
        <id>O95273</id>
        <label>CCNDBP1</label>
    </interactant>
    <organismsDiffer>false</organismsDiffer>
    <experiments>7</experiments>
</comment>
<comment type="interaction">
    <interactant intactId="EBI-748111">
        <id>Q96C28</id>
    </interactant>
    <interactant intactId="EBI-10172150">
        <id>P60370</id>
        <label>KRTAP10-5</label>
    </interactant>
    <organismsDiffer>false</organismsDiffer>
    <experiments>3</experiments>
</comment>
<comment type="interaction">
    <interactant intactId="EBI-748111">
        <id>Q96C28</id>
    </interactant>
    <interactant intactId="EBI-10172290">
        <id>P60409</id>
        <label>KRTAP10-7</label>
    </interactant>
    <organismsDiffer>false</organismsDiffer>
    <experiments>3</experiments>
</comment>
<comment type="interaction">
    <interactant intactId="EBI-748111">
        <id>Q96C28</id>
    </interactant>
    <interactant intactId="EBI-724076">
        <id>Q99750</id>
        <label>MDFI</label>
    </interactant>
    <organismsDiffer>false</organismsDiffer>
    <experiments>5</experiments>
</comment>
<comment type="interaction">
    <interactant intactId="EBI-748111">
        <id>Q96C28</id>
    </interactant>
    <interactant intactId="EBI-928842">
        <id>Q9GZM8</id>
        <label>NDEL1</label>
    </interactant>
    <organismsDiffer>false</organismsDiffer>
    <experiments>3</experiments>
</comment>
<comment type="interaction">
    <interactant intactId="EBI-748111">
        <id>Q96C28</id>
    </interactant>
    <interactant intactId="EBI-749285">
        <id>Q15311</id>
        <label>RALBP1</label>
    </interactant>
    <organismsDiffer>false</organismsDiffer>
    <experiments>6</experiments>
</comment>
<comment type="interaction">
    <interactant intactId="EBI-748111">
        <id>Q96C28</id>
    </interactant>
    <interactant intactId="EBI-712466">
        <id>Q16623</id>
        <label>STX1A</label>
    </interactant>
    <organismsDiffer>false</organismsDiffer>
    <experiments>3</experiments>
</comment>
<comment type="subcellular location">
    <subcellularLocation>
        <location evidence="6">Nucleus</location>
    </subcellularLocation>
</comment>
<comment type="similarity">
    <text evidence="6">Belongs to the krueppel C2H2-type zinc-finger protein family.</text>
</comment>
<comment type="sequence caution" evidence="6">
    <conflict type="erroneous initiation">
        <sequence resource="EMBL-CDS" id="AAH14894"/>
    </conflict>
    <text>Truncated N-terminus.</text>
</comment>
<comment type="sequence caution" evidence="6">
    <conflict type="erroneous initiation">
        <sequence resource="EMBL-CDS" id="BAF83121"/>
    </conflict>
    <text>Truncated N-terminus.</text>
</comment>
<name>ZN707_HUMAN</name>
<feature type="chain" id="PRO_0000233284" description="Zinc finger protein 707">
    <location>
        <begin position="1"/>
        <end position="371"/>
    </location>
</feature>
<feature type="domain" description="KRAB" evidence="2">
    <location>
        <begin position="8"/>
        <end position="79"/>
    </location>
</feature>
<feature type="zinc finger region" description="C2H2-type 1" evidence="1">
    <location>
        <begin position="176"/>
        <end position="198"/>
    </location>
</feature>
<feature type="zinc finger region" description="C2H2-type 2" evidence="1">
    <location>
        <begin position="204"/>
        <end position="226"/>
    </location>
</feature>
<feature type="zinc finger region" description="C2H2-type 3" evidence="1">
    <location>
        <begin position="232"/>
        <end position="254"/>
    </location>
</feature>
<feature type="zinc finger region" description="C2H2-type 4" evidence="1">
    <location>
        <begin position="260"/>
        <end position="282"/>
    </location>
</feature>
<feature type="zinc finger region" description="C2H2-type 5" evidence="1">
    <location>
        <begin position="288"/>
        <end position="310"/>
    </location>
</feature>
<feature type="zinc finger region" description="C2H2-type 6" evidence="1">
    <location>
        <begin position="316"/>
        <end position="338"/>
    </location>
</feature>
<feature type="zinc finger region" description="C2H2-type 7" evidence="1">
    <location>
        <begin position="344"/>
        <end position="366"/>
    </location>
</feature>
<feature type="region of interest" description="Disordered" evidence="3">
    <location>
        <begin position="71"/>
        <end position="143"/>
    </location>
</feature>
<feature type="compositionally biased region" description="Basic and acidic residues" evidence="3">
    <location>
        <begin position="89"/>
        <end position="98"/>
    </location>
</feature>
<feature type="compositionally biased region" description="Basic residues" evidence="3">
    <location>
        <begin position="102"/>
        <end position="112"/>
    </location>
</feature>
<feature type="compositionally biased region" description="Basic and acidic residues" evidence="3">
    <location>
        <begin position="113"/>
        <end position="128"/>
    </location>
</feature>
<feature type="cross-link" description="Glycyl lysine isopeptide (Lys-Gly) (interchain with G-Cter in SUMO2)" evidence="7">
    <location>
        <position position="144"/>
    </location>
</feature>
<feature type="sequence variant" id="VAR_033596" description="In dbSNP:rs6987308." evidence="4 5">
    <original>P</original>
    <variation>H</variation>
    <location>
        <position position="96"/>
    </location>
</feature>
<feature type="sequence conflict" description="In Ref. 1; BAF83121." evidence="6" ref="1">
    <original>E</original>
    <variation>V</variation>
    <location>
        <position position="26"/>
    </location>
</feature>
<feature type="sequence conflict" description="In Ref. 1; BAG51493." evidence="6" ref="1">
    <original>L</original>
    <variation>F</variation>
    <location>
        <position position="192"/>
    </location>
</feature>
<reference key="1">
    <citation type="journal article" date="2004" name="Nat. Genet.">
        <title>Complete sequencing and characterization of 21,243 full-length human cDNAs.</title>
        <authorList>
            <person name="Ota T."/>
            <person name="Suzuki Y."/>
            <person name="Nishikawa T."/>
            <person name="Otsuki T."/>
            <person name="Sugiyama T."/>
            <person name="Irie R."/>
            <person name="Wakamatsu A."/>
            <person name="Hayashi K."/>
            <person name="Sato H."/>
            <person name="Nagai K."/>
            <person name="Kimura K."/>
            <person name="Makita H."/>
            <person name="Sekine M."/>
            <person name="Obayashi M."/>
            <person name="Nishi T."/>
            <person name="Shibahara T."/>
            <person name="Tanaka T."/>
            <person name="Ishii S."/>
            <person name="Yamamoto J."/>
            <person name="Saito K."/>
            <person name="Kawai Y."/>
            <person name="Isono Y."/>
            <person name="Nakamura Y."/>
            <person name="Nagahari K."/>
            <person name="Murakami K."/>
            <person name="Yasuda T."/>
            <person name="Iwayanagi T."/>
            <person name="Wagatsuma M."/>
            <person name="Shiratori A."/>
            <person name="Sudo H."/>
            <person name="Hosoiri T."/>
            <person name="Kaku Y."/>
            <person name="Kodaira H."/>
            <person name="Kondo H."/>
            <person name="Sugawara M."/>
            <person name="Takahashi M."/>
            <person name="Kanda K."/>
            <person name="Yokoi T."/>
            <person name="Furuya T."/>
            <person name="Kikkawa E."/>
            <person name="Omura Y."/>
            <person name="Abe K."/>
            <person name="Kamihara K."/>
            <person name="Katsuta N."/>
            <person name="Sato K."/>
            <person name="Tanikawa M."/>
            <person name="Yamazaki M."/>
            <person name="Ninomiya K."/>
            <person name="Ishibashi T."/>
            <person name="Yamashita H."/>
            <person name="Murakawa K."/>
            <person name="Fujimori K."/>
            <person name="Tanai H."/>
            <person name="Kimata M."/>
            <person name="Watanabe M."/>
            <person name="Hiraoka S."/>
            <person name="Chiba Y."/>
            <person name="Ishida S."/>
            <person name="Ono Y."/>
            <person name="Takiguchi S."/>
            <person name="Watanabe S."/>
            <person name="Yosida M."/>
            <person name="Hotuta T."/>
            <person name="Kusano J."/>
            <person name="Kanehori K."/>
            <person name="Takahashi-Fujii A."/>
            <person name="Hara H."/>
            <person name="Tanase T.-O."/>
            <person name="Nomura Y."/>
            <person name="Togiya S."/>
            <person name="Komai F."/>
            <person name="Hara R."/>
            <person name="Takeuchi K."/>
            <person name="Arita M."/>
            <person name="Imose N."/>
            <person name="Musashino K."/>
            <person name="Yuuki H."/>
            <person name="Oshima A."/>
            <person name="Sasaki N."/>
            <person name="Aotsuka S."/>
            <person name="Yoshikawa Y."/>
            <person name="Matsunawa H."/>
            <person name="Ichihara T."/>
            <person name="Shiohata N."/>
            <person name="Sano S."/>
            <person name="Moriya S."/>
            <person name="Momiyama H."/>
            <person name="Satoh N."/>
            <person name="Takami S."/>
            <person name="Terashima Y."/>
            <person name="Suzuki O."/>
            <person name="Nakagawa S."/>
            <person name="Senoh A."/>
            <person name="Mizoguchi H."/>
            <person name="Goto Y."/>
            <person name="Shimizu F."/>
            <person name="Wakebe H."/>
            <person name="Hishigaki H."/>
            <person name="Watanabe T."/>
            <person name="Sugiyama A."/>
            <person name="Takemoto M."/>
            <person name="Kawakami B."/>
            <person name="Yamazaki M."/>
            <person name="Watanabe K."/>
            <person name="Kumagai A."/>
            <person name="Itakura S."/>
            <person name="Fukuzumi Y."/>
            <person name="Fujimori Y."/>
            <person name="Komiyama M."/>
            <person name="Tashiro H."/>
            <person name="Tanigami A."/>
            <person name="Fujiwara T."/>
            <person name="Ono T."/>
            <person name="Yamada K."/>
            <person name="Fujii Y."/>
            <person name="Ozaki K."/>
            <person name="Hirao M."/>
            <person name="Ohmori Y."/>
            <person name="Kawabata A."/>
            <person name="Hikiji T."/>
            <person name="Kobatake N."/>
            <person name="Inagaki H."/>
            <person name="Ikema Y."/>
            <person name="Okamoto S."/>
            <person name="Okitani R."/>
            <person name="Kawakami T."/>
            <person name="Noguchi S."/>
            <person name="Itoh T."/>
            <person name="Shigeta K."/>
            <person name="Senba T."/>
            <person name="Matsumura K."/>
            <person name="Nakajima Y."/>
            <person name="Mizuno T."/>
            <person name="Morinaga M."/>
            <person name="Sasaki M."/>
            <person name="Togashi T."/>
            <person name="Oyama M."/>
            <person name="Hata H."/>
            <person name="Watanabe M."/>
            <person name="Komatsu T."/>
            <person name="Mizushima-Sugano J."/>
            <person name="Satoh T."/>
            <person name="Shirai Y."/>
            <person name="Takahashi Y."/>
            <person name="Nakagawa K."/>
            <person name="Okumura K."/>
            <person name="Nagase T."/>
            <person name="Nomura N."/>
            <person name="Kikuchi H."/>
            <person name="Masuho Y."/>
            <person name="Yamashita R."/>
            <person name="Nakai K."/>
            <person name="Yada T."/>
            <person name="Nakamura Y."/>
            <person name="Ohara O."/>
            <person name="Isogai T."/>
            <person name="Sugano S."/>
        </authorList>
    </citation>
    <scope>NUCLEOTIDE SEQUENCE [LARGE SCALE MRNA]</scope>
    <source>
        <tissue>Brain</tissue>
    </source>
</reference>
<reference key="2">
    <citation type="journal article" date="2006" name="Nature">
        <title>DNA sequence and analysis of human chromosome 8.</title>
        <authorList>
            <person name="Nusbaum C."/>
            <person name="Mikkelsen T.S."/>
            <person name="Zody M.C."/>
            <person name="Asakawa S."/>
            <person name="Taudien S."/>
            <person name="Garber M."/>
            <person name="Kodira C.D."/>
            <person name="Schueler M.G."/>
            <person name="Shimizu A."/>
            <person name="Whittaker C.A."/>
            <person name="Chang J.L."/>
            <person name="Cuomo C.A."/>
            <person name="Dewar K."/>
            <person name="FitzGerald M.G."/>
            <person name="Yang X."/>
            <person name="Allen N.R."/>
            <person name="Anderson S."/>
            <person name="Asakawa T."/>
            <person name="Blechschmidt K."/>
            <person name="Bloom T."/>
            <person name="Borowsky M.L."/>
            <person name="Butler J."/>
            <person name="Cook A."/>
            <person name="Corum B."/>
            <person name="DeArellano K."/>
            <person name="DeCaprio D."/>
            <person name="Dooley K.T."/>
            <person name="Dorris L. III"/>
            <person name="Engels R."/>
            <person name="Gloeckner G."/>
            <person name="Hafez N."/>
            <person name="Hagopian D.S."/>
            <person name="Hall J.L."/>
            <person name="Ishikawa S.K."/>
            <person name="Jaffe D.B."/>
            <person name="Kamat A."/>
            <person name="Kudoh J."/>
            <person name="Lehmann R."/>
            <person name="Lokitsang T."/>
            <person name="Macdonald P."/>
            <person name="Major J.E."/>
            <person name="Matthews C.D."/>
            <person name="Mauceli E."/>
            <person name="Menzel U."/>
            <person name="Mihalev A.H."/>
            <person name="Minoshima S."/>
            <person name="Murayama Y."/>
            <person name="Naylor J.W."/>
            <person name="Nicol R."/>
            <person name="Nguyen C."/>
            <person name="O'Leary S.B."/>
            <person name="O'Neill K."/>
            <person name="Parker S.C.J."/>
            <person name="Polley A."/>
            <person name="Raymond C.K."/>
            <person name="Reichwald K."/>
            <person name="Rodriguez J."/>
            <person name="Sasaki T."/>
            <person name="Schilhabel M."/>
            <person name="Siddiqui R."/>
            <person name="Smith C.L."/>
            <person name="Sneddon T.P."/>
            <person name="Talamas J.A."/>
            <person name="Tenzin P."/>
            <person name="Topham K."/>
            <person name="Venkataraman V."/>
            <person name="Wen G."/>
            <person name="Yamazaki S."/>
            <person name="Young S.K."/>
            <person name="Zeng Q."/>
            <person name="Zimmer A.R."/>
            <person name="Rosenthal A."/>
            <person name="Birren B.W."/>
            <person name="Platzer M."/>
            <person name="Shimizu N."/>
            <person name="Lander E.S."/>
        </authorList>
    </citation>
    <scope>NUCLEOTIDE SEQUENCE [LARGE SCALE GENOMIC DNA]</scope>
</reference>
<reference key="3">
    <citation type="submission" date="2005-09" db="EMBL/GenBank/DDBJ databases">
        <authorList>
            <person name="Mural R.J."/>
            <person name="Istrail S."/>
            <person name="Sutton G.G."/>
            <person name="Florea L."/>
            <person name="Halpern A.L."/>
            <person name="Mobarry C.M."/>
            <person name="Lippert R."/>
            <person name="Walenz B."/>
            <person name="Shatkay H."/>
            <person name="Dew I."/>
            <person name="Miller J.R."/>
            <person name="Flanigan M.J."/>
            <person name="Edwards N.J."/>
            <person name="Bolanos R."/>
            <person name="Fasulo D."/>
            <person name="Halldorsson B.V."/>
            <person name="Hannenhalli S."/>
            <person name="Turner R."/>
            <person name="Yooseph S."/>
            <person name="Lu F."/>
            <person name="Nusskern D.R."/>
            <person name="Shue B.C."/>
            <person name="Zheng X.H."/>
            <person name="Zhong F."/>
            <person name="Delcher A.L."/>
            <person name="Huson D.H."/>
            <person name="Kravitz S.A."/>
            <person name="Mouchard L."/>
            <person name="Reinert K."/>
            <person name="Remington K.A."/>
            <person name="Clark A.G."/>
            <person name="Waterman M.S."/>
            <person name="Eichler E.E."/>
            <person name="Adams M.D."/>
            <person name="Hunkapiller M.W."/>
            <person name="Myers E.W."/>
            <person name="Venter J.C."/>
        </authorList>
    </citation>
    <scope>NUCLEOTIDE SEQUENCE [LARGE SCALE GENOMIC DNA]</scope>
    <scope>VARIANT HIS-96</scope>
</reference>
<reference key="4">
    <citation type="journal article" date="2004" name="Genome Res.">
        <title>The status, quality, and expansion of the NIH full-length cDNA project: the Mammalian Gene Collection (MGC).</title>
        <authorList>
            <consortium name="The MGC Project Team"/>
        </authorList>
    </citation>
    <scope>NUCLEOTIDE SEQUENCE [LARGE SCALE MRNA]</scope>
    <scope>VARIANT HIS-96</scope>
    <source>
        <tissue>Uterus</tissue>
    </source>
</reference>
<reference key="5">
    <citation type="journal article" date="2017" name="Nat. Struct. Mol. Biol.">
        <title>Site-specific mapping of the human SUMO proteome reveals co-modification with phosphorylation.</title>
        <authorList>
            <person name="Hendriks I.A."/>
            <person name="Lyon D."/>
            <person name="Young C."/>
            <person name="Jensen L.J."/>
            <person name="Vertegaal A.C."/>
            <person name="Nielsen M.L."/>
        </authorList>
    </citation>
    <scope>SUMOYLATION [LARGE SCALE ANALYSIS] AT LYS-144</scope>
    <scope>IDENTIFICATION BY MASS SPECTROMETRY [LARGE SCALE ANALYSIS]</scope>
</reference>
<keyword id="KW-0238">DNA-binding</keyword>
<keyword id="KW-1017">Isopeptide bond</keyword>
<keyword id="KW-0479">Metal-binding</keyword>
<keyword id="KW-0539">Nucleus</keyword>
<keyword id="KW-1267">Proteomics identification</keyword>
<keyword id="KW-1185">Reference proteome</keyword>
<keyword id="KW-0677">Repeat</keyword>
<keyword id="KW-0804">Transcription</keyword>
<keyword id="KW-0805">Transcription regulation</keyword>
<keyword id="KW-0832">Ubl conjugation</keyword>
<keyword id="KW-0862">Zinc</keyword>
<keyword id="KW-0863">Zinc-finger</keyword>